<organism>
    <name type="scientific">Neisseria meningitidis serogroup B (strain ATCC BAA-335 / MC58)</name>
    <dbReference type="NCBI Taxonomy" id="122586"/>
    <lineage>
        <taxon>Bacteria</taxon>
        <taxon>Pseudomonadati</taxon>
        <taxon>Pseudomonadota</taxon>
        <taxon>Betaproteobacteria</taxon>
        <taxon>Neisseriales</taxon>
        <taxon>Neisseriaceae</taxon>
        <taxon>Neisseria</taxon>
    </lineage>
</organism>
<evidence type="ECO:0000255" key="1">
    <source>
        <dbReference type="HAMAP-Rule" id="MF_00158"/>
    </source>
</evidence>
<comment type="function">
    <text evidence="1">Catalyzes the condensation of pantoate with beta-alanine in an ATP-dependent reaction via a pantoyl-adenylate intermediate.</text>
</comment>
<comment type="catalytic activity">
    <reaction evidence="1">
        <text>(R)-pantoate + beta-alanine + ATP = (R)-pantothenate + AMP + diphosphate + H(+)</text>
        <dbReference type="Rhea" id="RHEA:10912"/>
        <dbReference type="ChEBI" id="CHEBI:15378"/>
        <dbReference type="ChEBI" id="CHEBI:15980"/>
        <dbReference type="ChEBI" id="CHEBI:29032"/>
        <dbReference type="ChEBI" id="CHEBI:30616"/>
        <dbReference type="ChEBI" id="CHEBI:33019"/>
        <dbReference type="ChEBI" id="CHEBI:57966"/>
        <dbReference type="ChEBI" id="CHEBI:456215"/>
        <dbReference type="EC" id="6.3.2.1"/>
    </reaction>
</comment>
<comment type="pathway">
    <text evidence="1">Cofactor biosynthesis; (R)-pantothenate biosynthesis; (R)-pantothenate from (R)-pantoate and beta-alanine: step 1/1.</text>
</comment>
<comment type="subunit">
    <text evidence="1">Homodimer.</text>
</comment>
<comment type="subcellular location">
    <subcellularLocation>
        <location evidence="1">Cytoplasm</location>
    </subcellularLocation>
</comment>
<comment type="miscellaneous">
    <text evidence="1">The reaction proceeds by a bi uni uni bi ping pong mechanism.</text>
</comment>
<comment type="similarity">
    <text evidence="1">Belongs to the pantothenate synthetase family.</text>
</comment>
<accession>P57036</accession>
<protein>
    <recommendedName>
        <fullName evidence="1">Pantothenate synthetase</fullName>
        <shortName evidence="1">PS</shortName>
        <ecNumber evidence="1">6.3.2.1</ecNumber>
    </recommendedName>
    <alternativeName>
        <fullName evidence="1">Pantoate--beta-alanine ligase</fullName>
    </alternativeName>
    <alternativeName>
        <fullName evidence="1">Pantoate-activating enzyme</fullName>
    </alternativeName>
</protein>
<reference key="1">
    <citation type="journal article" date="2000" name="Science">
        <title>Complete genome sequence of Neisseria meningitidis serogroup B strain MC58.</title>
        <authorList>
            <person name="Tettelin H."/>
            <person name="Saunders N.J."/>
            <person name="Heidelberg J.F."/>
            <person name="Jeffries A.C."/>
            <person name="Nelson K.E."/>
            <person name="Eisen J.A."/>
            <person name="Ketchum K.A."/>
            <person name="Hood D.W."/>
            <person name="Peden J.F."/>
            <person name="Dodson R.J."/>
            <person name="Nelson W.C."/>
            <person name="Gwinn M.L."/>
            <person name="DeBoy R.T."/>
            <person name="Peterson J.D."/>
            <person name="Hickey E.K."/>
            <person name="Haft D.H."/>
            <person name="Salzberg S.L."/>
            <person name="White O."/>
            <person name="Fleischmann R.D."/>
            <person name="Dougherty B.A."/>
            <person name="Mason T.M."/>
            <person name="Ciecko A."/>
            <person name="Parksey D.S."/>
            <person name="Blair E."/>
            <person name="Cittone H."/>
            <person name="Clark E.B."/>
            <person name="Cotton M.D."/>
            <person name="Utterback T.R."/>
            <person name="Khouri H.M."/>
            <person name="Qin H."/>
            <person name="Vamathevan J.J."/>
            <person name="Gill J."/>
            <person name="Scarlato V."/>
            <person name="Masignani V."/>
            <person name="Pizza M."/>
            <person name="Grandi G."/>
            <person name="Sun L."/>
            <person name="Smith H.O."/>
            <person name="Fraser C.M."/>
            <person name="Moxon E.R."/>
            <person name="Rappuoli R."/>
            <person name="Venter J.C."/>
        </authorList>
    </citation>
    <scope>NUCLEOTIDE SEQUENCE [LARGE SCALE GENOMIC DNA]</scope>
    <source>
        <strain>ATCC BAA-335 / MC58</strain>
    </source>
</reference>
<dbReference type="EC" id="6.3.2.1" evidence="1"/>
<dbReference type="EMBL" id="AE002098">
    <property type="protein sequence ID" value="AAF41282.1"/>
    <property type="molecule type" value="Genomic_DNA"/>
</dbReference>
<dbReference type="PIR" id="G81148">
    <property type="entry name" value="G81148"/>
</dbReference>
<dbReference type="RefSeq" id="NP_273912.1">
    <property type="nucleotide sequence ID" value="NC_003112.2"/>
</dbReference>
<dbReference type="RefSeq" id="WP_002222669.1">
    <property type="nucleotide sequence ID" value="NC_003112.2"/>
</dbReference>
<dbReference type="SMR" id="P57036"/>
<dbReference type="FunCoup" id="P57036">
    <property type="interactions" value="511"/>
</dbReference>
<dbReference type="STRING" id="122586.NMB0871"/>
<dbReference type="PaxDb" id="122586-NMB0871"/>
<dbReference type="KEGG" id="nme:NMB0871"/>
<dbReference type="PATRIC" id="fig|122586.8.peg.1085"/>
<dbReference type="HOGENOM" id="CLU_047148_0_0_4"/>
<dbReference type="InParanoid" id="P57036"/>
<dbReference type="OrthoDB" id="9773087at2"/>
<dbReference type="UniPathway" id="UPA00028">
    <property type="reaction ID" value="UER00005"/>
</dbReference>
<dbReference type="Proteomes" id="UP000000425">
    <property type="component" value="Chromosome"/>
</dbReference>
<dbReference type="GO" id="GO:0005829">
    <property type="term" value="C:cytosol"/>
    <property type="evidence" value="ECO:0000318"/>
    <property type="project" value="GO_Central"/>
</dbReference>
<dbReference type="GO" id="GO:0005524">
    <property type="term" value="F:ATP binding"/>
    <property type="evidence" value="ECO:0007669"/>
    <property type="project" value="UniProtKB-KW"/>
</dbReference>
<dbReference type="GO" id="GO:0004592">
    <property type="term" value="F:pantoate-beta-alanine ligase activity"/>
    <property type="evidence" value="ECO:0000318"/>
    <property type="project" value="GO_Central"/>
</dbReference>
<dbReference type="GO" id="GO:0015940">
    <property type="term" value="P:pantothenate biosynthetic process"/>
    <property type="evidence" value="ECO:0000318"/>
    <property type="project" value="GO_Central"/>
</dbReference>
<dbReference type="CDD" id="cd00560">
    <property type="entry name" value="PanC"/>
    <property type="match status" value="1"/>
</dbReference>
<dbReference type="FunFam" id="3.30.1300.10:FF:000001">
    <property type="entry name" value="Pantothenate synthetase"/>
    <property type="match status" value="1"/>
</dbReference>
<dbReference type="FunFam" id="3.40.50.620:FF:000013">
    <property type="entry name" value="Pantothenate synthetase"/>
    <property type="match status" value="1"/>
</dbReference>
<dbReference type="Gene3D" id="3.40.50.620">
    <property type="entry name" value="HUPs"/>
    <property type="match status" value="1"/>
</dbReference>
<dbReference type="Gene3D" id="3.30.1300.10">
    <property type="entry name" value="Pantoate-beta-alanine ligase, C-terminal domain"/>
    <property type="match status" value="1"/>
</dbReference>
<dbReference type="HAMAP" id="MF_00158">
    <property type="entry name" value="PanC"/>
    <property type="match status" value="1"/>
</dbReference>
<dbReference type="InterPro" id="IPR004821">
    <property type="entry name" value="Cyt_trans-like"/>
</dbReference>
<dbReference type="InterPro" id="IPR003721">
    <property type="entry name" value="Pantoate_ligase"/>
</dbReference>
<dbReference type="InterPro" id="IPR042176">
    <property type="entry name" value="Pantoate_ligase_C"/>
</dbReference>
<dbReference type="InterPro" id="IPR014729">
    <property type="entry name" value="Rossmann-like_a/b/a_fold"/>
</dbReference>
<dbReference type="NCBIfam" id="TIGR00125">
    <property type="entry name" value="cyt_tran_rel"/>
    <property type="match status" value="1"/>
</dbReference>
<dbReference type="NCBIfam" id="TIGR00018">
    <property type="entry name" value="panC"/>
    <property type="match status" value="1"/>
</dbReference>
<dbReference type="PANTHER" id="PTHR21299">
    <property type="entry name" value="CYTIDYLATE KINASE/PANTOATE-BETA-ALANINE LIGASE"/>
    <property type="match status" value="1"/>
</dbReference>
<dbReference type="PANTHER" id="PTHR21299:SF1">
    <property type="entry name" value="PANTOATE--BETA-ALANINE LIGASE"/>
    <property type="match status" value="1"/>
</dbReference>
<dbReference type="Pfam" id="PF02569">
    <property type="entry name" value="Pantoate_ligase"/>
    <property type="match status" value="1"/>
</dbReference>
<dbReference type="SUPFAM" id="SSF52374">
    <property type="entry name" value="Nucleotidylyl transferase"/>
    <property type="match status" value="1"/>
</dbReference>
<name>PANC_NEIMB</name>
<gene>
    <name evidence="1" type="primary">panC</name>
    <name type="ordered locus">NMB0871</name>
</gene>
<proteinExistence type="inferred from homology"/>
<feature type="chain" id="PRO_0000128248" description="Pantothenate synthetase">
    <location>
        <begin position="1"/>
        <end position="278"/>
    </location>
</feature>
<feature type="active site" description="Proton donor" evidence="1">
    <location>
        <position position="33"/>
    </location>
</feature>
<feature type="binding site" evidence="1">
    <location>
        <begin position="26"/>
        <end position="33"/>
    </location>
    <ligand>
        <name>ATP</name>
        <dbReference type="ChEBI" id="CHEBI:30616"/>
    </ligand>
</feature>
<feature type="binding site" evidence="1">
    <location>
        <position position="57"/>
    </location>
    <ligand>
        <name>(R)-pantoate</name>
        <dbReference type="ChEBI" id="CHEBI:15980"/>
    </ligand>
</feature>
<feature type="binding site" evidence="1">
    <location>
        <position position="57"/>
    </location>
    <ligand>
        <name>beta-alanine</name>
        <dbReference type="ChEBI" id="CHEBI:57966"/>
    </ligand>
</feature>
<feature type="binding site" evidence="1">
    <location>
        <begin position="144"/>
        <end position="147"/>
    </location>
    <ligand>
        <name>ATP</name>
        <dbReference type="ChEBI" id="CHEBI:30616"/>
    </ligand>
</feature>
<feature type="binding site" evidence="1">
    <location>
        <position position="150"/>
    </location>
    <ligand>
        <name>(R)-pantoate</name>
        <dbReference type="ChEBI" id="CHEBI:15980"/>
    </ligand>
</feature>
<feature type="binding site" evidence="1">
    <location>
        <position position="173"/>
    </location>
    <ligand>
        <name>ATP</name>
        <dbReference type="ChEBI" id="CHEBI:30616"/>
    </ligand>
</feature>
<feature type="binding site" evidence="1">
    <location>
        <begin position="181"/>
        <end position="184"/>
    </location>
    <ligand>
        <name>ATP</name>
        <dbReference type="ChEBI" id="CHEBI:30616"/>
    </ligand>
</feature>
<keyword id="KW-0067">ATP-binding</keyword>
<keyword id="KW-0963">Cytoplasm</keyword>
<keyword id="KW-0436">Ligase</keyword>
<keyword id="KW-0547">Nucleotide-binding</keyword>
<keyword id="KW-0566">Pantothenate biosynthesis</keyword>
<keyword id="KW-1185">Reference proteome</keyword>
<sequence length="278" mass="31081">MQIIHTIRELRAWRKNAGKVAFVPTMGNLHEGHLALVREAKKRADSVVVSIFVNRLQFGQGEDFDKYPRTLQQDADKLAAEGIAVVFAPDEKELYPNVEQRYNVEPPNLQNELCGKFRPGHFRGVATVVSKLFHIVSPDIACFGKKDYQQLAVIKGFVEDLNFDVEIVPVDTGRAEDGLALSSRNQYLSAAERDEAPRLYRELKAVAESLVQGSLDYAGLEKRAVQSLTEYGWVVDYVEIRRADTLEVARAGDKKLVVLAAACLGTTRLIDNLEIKLP</sequence>